<protein>
    <recommendedName>
        <fullName>Interphotoreceptor matrix proteoglycan 2</fullName>
    </recommendedName>
    <alternativeName>
        <fullName>Sialoprotein associated with cones and rods proteoglycan</fullName>
        <shortName>Spacrcan</shortName>
    </alternativeName>
</protein>
<organism>
    <name type="scientific">Mus musculus</name>
    <name type="common">Mouse</name>
    <dbReference type="NCBI Taxonomy" id="10090"/>
    <lineage>
        <taxon>Eukaryota</taxon>
        <taxon>Metazoa</taxon>
        <taxon>Chordata</taxon>
        <taxon>Craniata</taxon>
        <taxon>Vertebrata</taxon>
        <taxon>Euteleostomi</taxon>
        <taxon>Mammalia</taxon>
        <taxon>Eutheria</taxon>
        <taxon>Euarchontoglires</taxon>
        <taxon>Glires</taxon>
        <taxon>Rodentia</taxon>
        <taxon>Myomorpha</taxon>
        <taxon>Muroidea</taxon>
        <taxon>Muridae</taxon>
        <taxon>Murinae</taxon>
        <taxon>Mus</taxon>
        <taxon>Mus</taxon>
    </lineage>
</organism>
<sequence length="1243" mass="138102">MIMFLPVGRMSLGILILFLTGGNLVSASEERQEPMHAVSVLSPEKSTDLSLPTRKRQLLDATETGRRWLLRRRRSILFPNGVKICSSETVAEAVANHVKYFKARVCQEAIWEAFRTFWDRLPGRDEYRHWMNLCEDGVTSVFEMGAHFSQSVEHRNLIMKKLAYTREAESSSCKDQSCGPELSFPVPIGETSTLTGAVSSASYPGLASESSAASPQESISNEIENVTEEPTQPAAEQIAEFSIQLLGKRYSEELRDPSSALYRLLVEEFISEVEKAFTGLPGYKGIRVLEFRAPEENDSGIDVHYAVTFNGEAISNTTWDLISLHSNKVENHGLVEMDDKPTAVYTISNFRDYIAETLHQNFLMGNSSLNPDPKSLQLINVRGVLLPQTEDIVWNTQSSSLQVTTSSILDNTLQAEWLSADTTTTTTTTISPFGFSSSSPSATGRELQSQSALRDVVSTSKLASPTKVVLSSLPEILGGSSLTLHSVTPAVLQPDLPVAPEGRTSGSFILEDGLASTEELEDTSIDGLPSSPLIQPVPKETVPPMEDSDTALLSTPHLTSSAIEDLTKDIGTPSGLESLASNISDQLEVIPWFPDTSVEKDFIFESGLGSGSGKDVDVIDWPWSETSLEKTTKPLSKSWSEEQDALLPTEGREKLHIDGRVDSTEQIIESSEHRYGDRPIHFIEEESHVRSTIPIFVESATPPTSPIFSKHTSDVPDIDSYSLTKPPFLPVTIAIPASTKKTDEVLKEDMVHTESSSHKELDSEVPVSRPDMQPVWTMLPESDTVWTRTSSLGKLSRDTLASTPESTDRLWLKASMTQSTELPSTTHSTQLEEEVIMAVQDISLELDQVGTDYYQSELTEEQHGKADSYVEMSTSVHYTEMPIVALPTKGGVLSHTQTAGALVVFFSLRVTNMLFSEDLFNKNSLEYKALEQRFLELLVPYLQSNLSGFQNLEILSFRNGSIVVNSRVRFAESAPPNVNKAMYRILEDFCTTAYQTMNLDIDKYSLDVESGDEANPCKFQACNEFSECLVNPWSGEAKCKCYPGYLSVDELPCQSLCDLQPDFCLNDGKCDIMPGHGAICRCRVGSNWWYRGQHCEEFVSEPFVIGITIASVVSFLLVASAVVFFLVKMLQAQNVRRERQRPTSSSRHPDSLSSVENAMKYNPAYESHLAGCELYEKSYSQHPFYSSASEEVIGGLSREEIRQMYESSDLSKEEIQERMRILELYANDPEFAAFVREHQMEEL</sequence>
<accession>Q80XH2</accession>
<accession>Q810Y3</accession>
<accession>Q8C8E4</accession>
<dbReference type="EMBL" id="AY174061">
    <property type="protein sequence ID" value="AAO21221.1"/>
    <property type="status" value="ALT_SEQ"/>
    <property type="molecule type" value="mRNA"/>
</dbReference>
<dbReference type="EMBL" id="BC048863">
    <property type="protein sequence ID" value="AAH48863.1"/>
    <property type="molecule type" value="mRNA"/>
</dbReference>
<dbReference type="EMBL" id="AK047356">
    <property type="protein sequence ID" value="BAC33032.1"/>
    <property type="molecule type" value="mRNA"/>
</dbReference>
<dbReference type="CCDS" id="CCDS37358.1">
    <molecule id="Q80XH2-1"/>
</dbReference>
<dbReference type="RefSeq" id="NP_777365.2">
    <molecule id="Q80XH2-1"/>
    <property type="nucleotide sequence ID" value="NM_174876.3"/>
</dbReference>
<dbReference type="SMR" id="Q80XH2"/>
<dbReference type="FunCoup" id="Q80XH2">
    <property type="interactions" value="18"/>
</dbReference>
<dbReference type="STRING" id="10090.ENSMUSP00000063648"/>
<dbReference type="GlyCosmos" id="Q80XH2">
    <property type="glycosylation" value="15 sites, No reported glycans"/>
</dbReference>
<dbReference type="GlyGen" id="Q80XH2">
    <property type="glycosylation" value="15 sites"/>
</dbReference>
<dbReference type="iPTMnet" id="Q80XH2"/>
<dbReference type="PhosphoSitePlus" id="Q80XH2"/>
<dbReference type="PaxDb" id="10090-ENSMUSP00000063648"/>
<dbReference type="ProteomicsDB" id="266977">
    <molecule id="Q80XH2-1"/>
</dbReference>
<dbReference type="ProteomicsDB" id="266978">
    <molecule id="Q80XH2-2"/>
</dbReference>
<dbReference type="Antibodypedia" id="32271">
    <property type="antibodies" value="44 antibodies from 20 providers"/>
</dbReference>
<dbReference type="DNASU" id="224224"/>
<dbReference type="Ensembl" id="ENSMUST00000069936.8">
    <molecule id="Q80XH2-1"/>
    <property type="protein sequence ID" value="ENSMUSP00000063648.8"/>
    <property type="gene ID" value="ENSMUSG00000035270.16"/>
</dbReference>
<dbReference type="Ensembl" id="ENSMUST00000160116.8">
    <molecule id="Q80XH2-2"/>
    <property type="protein sequence ID" value="ENSMUSP00000125135.2"/>
    <property type="gene ID" value="ENSMUSG00000035270.16"/>
</dbReference>
<dbReference type="GeneID" id="224224"/>
<dbReference type="KEGG" id="mmu:224224"/>
<dbReference type="UCSC" id="uc007zmm.1">
    <molecule id="Q80XH2-1"/>
    <property type="organism name" value="mouse"/>
</dbReference>
<dbReference type="UCSC" id="uc012agq.1">
    <molecule id="Q80XH2-2"/>
    <property type="organism name" value="mouse"/>
</dbReference>
<dbReference type="AGR" id="MGI:3044955"/>
<dbReference type="CTD" id="50939"/>
<dbReference type="MGI" id="MGI:3044955">
    <property type="gene designation" value="Impg2"/>
</dbReference>
<dbReference type="VEuPathDB" id="HostDB:ENSMUSG00000035270"/>
<dbReference type="eggNOG" id="ENOG502QT6W">
    <property type="taxonomic scope" value="Eukaryota"/>
</dbReference>
<dbReference type="GeneTree" id="ENSGT00530000063503"/>
<dbReference type="HOGENOM" id="CLU_005111_0_0_1"/>
<dbReference type="InParanoid" id="Q80XH2"/>
<dbReference type="OMA" id="ESSIWPW"/>
<dbReference type="OrthoDB" id="8960773at2759"/>
<dbReference type="PhylomeDB" id="Q80XH2"/>
<dbReference type="TreeFam" id="TF331340"/>
<dbReference type="BioGRID-ORCS" id="224224">
    <property type="hits" value="3 hits in 79 CRISPR screens"/>
</dbReference>
<dbReference type="PRO" id="PR:Q80XH2"/>
<dbReference type="Proteomes" id="UP000000589">
    <property type="component" value="Chromosome 16"/>
</dbReference>
<dbReference type="RNAct" id="Q80XH2">
    <property type="molecule type" value="protein"/>
</dbReference>
<dbReference type="Bgee" id="ENSMUSG00000035270">
    <property type="expression patterns" value="Expressed in layer of retina and 38 other cell types or tissues"/>
</dbReference>
<dbReference type="GO" id="GO:0042995">
    <property type="term" value="C:cell projection"/>
    <property type="evidence" value="ECO:0007669"/>
    <property type="project" value="UniProtKB-KW"/>
</dbReference>
<dbReference type="GO" id="GO:0031012">
    <property type="term" value="C:extracellular matrix"/>
    <property type="evidence" value="ECO:0000304"/>
    <property type="project" value="MGI"/>
</dbReference>
<dbReference type="GO" id="GO:0005576">
    <property type="term" value="C:extracellular region"/>
    <property type="evidence" value="ECO:0007669"/>
    <property type="project" value="UniProtKB-KW"/>
</dbReference>
<dbReference type="GO" id="GO:0033165">
    <property type="term" value="C:interphotoreceptor matrix"/>
    <property type="evidence" value="ECO:0000314"/>
    <property type="project" value="MGI"/>
</dbReference>
<dbReference type="GO" id="GO:0016020">
    <property type="term" value="C:membrane"/>
    <property type="evidence" value="ECO:0007669"/>
    <property type="project" value="UniProtKB-KW"/>
</dbReference>
<dbReference type="GO" id="GO:0043235">
    <property type="term" value="C:receptor complex"/>
    <property type="evidence" value="ECO:0000266"/>
    <property type="project" value="MGI"/>
</dbReference>
<dbReference type="GO" id="GO:0008201">
    <property type="term" value="F:heparin binding"/>
    <property type="evidence" value="ECO:0000314"/>
    <property type="project" value="MGI"/>
</dbReference>
<dbReference type="GO" id="GO:0005540">
    <property type="term" value="F:hyaluronic acid binding"/>
    <property type="evidence" value="ECO:0000314"/>
    <property type="project" value="MGI"/>
</dbReference>
<dbReference type="GO" id="GO:0030198">
    <property type="term" value="P:extracellular matrix organization"/>
    <property type="evidence" value="ECO:0000315"/>
    <property type="project" value="MGI"/>
</dbReference>
<dbReference type="GO" id="GO:0008104">
    <property type="term" value="P:protein localization"/>
    <property type="evidence" value="ECO:0000315"/>
    <property type="project" value="MGI"/>
</dbReference>
<dbReference type="GO" id="GO:0060042">
    <property type="term" value="P:retina morphogenesis in camera-type eye"/>
    <property type="evidence" value="ECO:0000315"/>
    <property type="project" value="MGI"/>
</dbReference>
<dbReference type="GO" id="GO:0007601">
    <property type="term" value="P:visual perception"/>
    <property type="evidence" value="ECO:0007669"/>
    <property type="project" value="InterPro"/>
</dbReference>
<dbReference type="Gene3D" id="3.30.70.960">
    <property type="entry name" value="SEA domain"/>
    <property type="match status" value="1"/>
</dbReference>
<dbReference type="InterPro" id="IPR000742">
    <property type="entry name" value="EGF-like_dom"/>
</dbReference>
<dbReference type="InterPro" id="IPR039861">
    <property type="entry name" value="IMPG"/>
</dbReference>
<dbReference type="InterPro" id="IPR000082">
    <property type="entry name" value="SEA_dom"/>
</dbReference>
<dbReference type="InterPro" id="IPR036364">
    <property type="entry name" value="SEA_dom_sf"/>
</dbReference>
<dbReference type="PANTHER" id="PTHR12199">
    <property type="entry name" value="INTERPHOTORECEPTOR MATRIX PROTEOGLYCAN"/>
    <property type="match status" value="1"/>
</dbReference>
<dbReference type="PANTHER" id="PTHR12199:SF4">
    <property type="entry name" value="INTERPHOTORECEPTOR MATRIX PROTEOGLYCAN 2"/>
    <property type="match status" value="1"/>
</dbReference>
<dbReference type="Pfam" id="PF01390">
    <property type="entry name" value="SEA"/>
    <property type="match status" value="2"/>
</dbReference>
<dbReference type="SMART" id="SM00200">
    <property type="entry name" value="SEA"/>
    <property type="match status" value="2"/>
</dbReference>
<dbReference type="SUPFAM" id="SSF82671">
    <property type="entry name" value="SEA domain"/>
    <property type="match status" value="2"/>
</dbReference>
<dbReference type="PROSITE" id="PS01186">
    <property type="entry name" value="EGF_2"/>
    <property type="match status" value="1"/>
</dbReference>
<dbReference type="PROSITE" id="PS50026">
    <property type="entry name" value="EGF_3"/>
    <property type="match status" value="2"/>
</dbReference>
<dbReference type="PROSITE" id="PS50024">
    <property type="entry name" value="SEA"/>
    <property type="match status" value="2"/>
</dbReference>
<proteinExistence type="evidence at protein level"/>
<feature type="signal peptide" evidence="2">
    <location>
        <begin position="1"/>
        <end position="27"/>
    </location>
</feature>
<feature type="chain" id="PRO_0000320150" description="Interphotoreceptor matrix proteoglycan 2">
    <location>
        <begin position="28"/>
        <end position="1243"/>
    </location>
</feature>
<feature type="topological domain" description="Extracellular" evidence="2">
    <location>
        <begin position="28"/>
        <end position="1106"/>
    </location>
</feature>
<feature type="transmembrane region" description="Helical" evidence="2">
    <location>
        <begin position="1107"/>
        <end position="1127"/>
    </location>
</feature>
<feature type="topological domain" description="Cytoplasmic" evidence="2">
    <location>
        <begin position="1128"/>
        <end position="1243"/>
    </location>
</feature>
<feature type="domain" description="SEA 1" evidence="4">
    <location>
        <begin position="235"/>
        <end position="349"/>
    </location>
</feature>
<feature type="domain" description="SEA 2" evidence="4">
    <location>
        <begin position="900"/>
        <end position="1013"/>
    </location>
</feature>
<feature type="domain" description="EGF-like 1" evidence="3">
    <location>
        <begin position="1013"/>
        <end position="1054"/>
    </location>
</feature>
<feature type="domain" description="EGF-like 2" evidence="3">
    <location>
        <begin position="1055"/>
        <end position="1096"/>
    </location>
</feature>
<feature type="region of interest" description="Disordered" evidence="5">
    <location>
        <begin position="205"/>
        <end position="234"/>
    </location>
</feature>
<feature type="region of interest" description="Hyaluronan-binding motif involved in chondroitin sulfate A-binding">
    <location>
        <begin position="255"/>
        <end position="263"/>
    </location>
</feature>
<feature type="region of interest" description="Disordered" evidence="5">
    <location>
        <begin position="748"/>
        <end position="768"/>
    </location>
</feature>
<feature type="region of interest" description="Hyaluronan-binding motif involved in chondroitin sulfate C-binding">
    <location>
        <begin position="1083"/>
        <end position="1091"/>
    </location>
</feature>
<feature type="region of interest" description="Hyaluronan-binding motif involved in chondroitin sulfate A- and C-binding">
    <location>
        <begin position="1128"/>
        <end position="1136"/>
    </location>
</feature>
<feature type="region of interest" description="Hyaluronan-binding motif involved in chondroitin sulfate C-binding">
    <location>
        <begin position="1139"/>
        <end position="1147"/>
    </location>
</feature>
<feature type="region of interest" description="Hyaluronan-binding motif involved in chondroitin sulfate A- and C-binding motif">
    <location>
        <begin position="1212"/>
        <end position="1220"/>
    </location>
</feature>
<feature type="compositionally biased region" description="Low complexity" evidence="5">
    <location>
        <begin position="207"/>
        <end position="220"/>
    </location>
</feature>
<feature type="compositionally biased region" description="Polar residues" evidence="5">
    <location>
        <begin position="221"/>
        <end position="230"/>
    </location>
</feature>
<feature type="compositionally biased region" description="Basic and acidic residues" evidence="5">
    <location>
        <begin position="748"/>
        <end position="762"/>
    </location>
</feature>
<feature type="glycosylation site" description="N-linked (GlcNAc...) asparagine" evidence="2">
    <location>
        <position position="225"/>
    </location>
</feature>
<feature type="glycosylation site" description="N-linked (GlcNAc...) asparagine" evidence="2">
    <location>
        <position position="297"/>
    </location>
</feature>
<feature type="glycosylation site" description="N-linked (GlcNAc...) asparagine" evidence="2">
    <location>
        <position position="316"/>
    </location>
</feature>
<feature type="glycosylation site" description="N-linked (GlcNAc...) asparagine" evidence="2">
    <location>
        <position position="366"/>
    </location>
</feature>
<feature type="glycosylation site" description="O-linked (GalNAc...) threonine" evidence="2">
    <location>
        <position position="427"/>
    </location>
</feature>
<feature type="glycosylation site" description="O-linked (GalNAc...) threonine" evidence="2">
    <location>
        <position position="428"/>
    </location>
</feature>
<feature type="glycosylation site" description="O-linked (GalNAc...) threonine" evidence="2">
    <location>
        <position position="429"/>
    </location>
</feature>
<feature type="glycosylation site" description="N-linked (GlcNAc...) asparagine" evidence="2">
    <location>
        <position position="582"/>
    </location>
</feature>
<feature type="glycosylation site" description="O-linked (GalNAc...) threonine" evidence="2">
    <location>
        <position position="701"/>
    </location>
</feature>
<feature type="glycosylation site" description="O-linked (GalNAc...) threonine" evidence="2">
    <location>
        <position position="704"/>
    </location>
</feature>
<feature type="glycosylation site" description="O-linked (GalNAc...) threonine" evidence="2">
    <location>
        <position position="712"/>
    </location>
</feature>
<feature type="glycosylation site" description="O-linked (GalNAc...) threonine" evidence="2">
    <location>
        <position position="817"/>
    </location>
</feature>
<feature type="glycosylation site" description="O-linked (GalNAc...) threonine" evidence="2">
    <location>
        <position position="888"/>
    </location>
</feature>
<feature type="glycosylation site" description="N-linked (GlcNAc...) asparagine" evidence="2">
    <location>
        <position position="945"/>
    </location>
</feature>
<feature type="glycosylation site" description="N-linked (GlcNAc...) asparagine" evidence="2">
    <location>
        <position position="959"/>
    </location>
</feature>
<feature type="disulfide bond" evidence="3">
    <location>
        <begin position="1017"/>
        <end position="1028"/>
    </location>
</feature>
<feature type="disulfide bond" evidence="3">
    <location>
        <begin position="1022"/>
        <end position="1039"/>
    </location>
</feature>
<feature type="disulfide bond" evidence="3">
    <location>
        <begin position="1041"/>
        <end position="1053"/>
    </location>
</feature>
<feature type="disulfide bond" evidence="3">
    <location>
        <begin position="1057"/>
        <end position="1070"/>
    </location>
</feature>
<feature type="disulfide bond" evidence="3">
    <location>
        <begin position="1064"/>
        <end position="1080"/>
    </location>
</feature>
<feature type="disulfide bond" evidence="3">
    <location>
        <begin position="1082"/>
        <end position="1095"/>
    </location>
</feature>
<feature type="splice variant" id="VSP_031612" description="In isoform 2." evidence="9">
    <location>
        <begin position="381"/>
        <end position="489"/>
    </location>
</feature>
<feature type="mutagenesis site" description="Decreased-binding affinity to hyaluronan." evidence="7">
    <original>R</original>
    <variation>H</variation>
    <location>
        <position position="255"/>
    </location>
</feature>
<feature type="mutagenesis site" description="Decreased-binding affinity to hyaluronan." evidence="7">
    <original>R</original>
    <variation>H</variation>
    <location>
        <position position="263"/>
    </location>
</feature>
<feature type="mutagenesis site" description="Decreased-binding affinity to hyaluronan." evidence="7">
    <original>R</original>
    <variation>Q</variation>
    <location>
        <position position="1083"/>
    </location>
</feature>
<feature type="mutagenesis site" description="Decreased-binding affinity to hyaluronan." evidence="7">
    <original>R</original>
    <variation>Q</variation>
    <location>
        <position position="1091"/>
    </location>
</feature>
<feature type="mutagenesis site" description="Most important decrease in binding affinity to hyaluronan." evidence="7">
    <original>RRER</original>
    <variation>SSES</variation>
    <location>
        <begin position="1136"/>
        <end position="1139"/>
    </location>
</feature>
<feature type="mutagenesis site" description="Important decrease in binding affinity to hyaluronan." evidence="7">
    <original>R</original>
    <variation>G</variation>
    <location>
        <position position="1147"/>
    </location>
</feature>
<evidence type="ECO:0000250" key="1">
    <source>
        <dbReference type="UniProtKB" id="Q9BZV3"/>
    </source>
</evidence>
<evidence type="ECO:0000255" key="2"/>
<evidence type="ECO:0000255" key="3">
    <source>
        <dbReference type="PROSITE-ProRule" id="PRU00076"/>
    </source>
</evidence>
<evidence type="ECO:0000255" key="4">
    <source>
        <dbReference type="PROSITE-ProRule" id="PRU00188"/>
    </source>
</evidence>
<evidence type="ECO:0000256" key="5">
    <source>
        <dbReference type="SAM" id="MobiDB-lite"/>
    </source>
</evidence>
<evidence type="ECO:0000269" key="6">
    <source>
    </source>
</evidence>
<evidence type="ECO:0000269" key="7">
    <source>
    </source>
</evidence>
<evidence type="ECO:0000269" key="8">
    <source>
    </source>
</evidence>
<evidence type="ECO:0000303" key="9">
    <source>
    </source>
</evidence>
<evidence type="ECO:0000305" key="10"/>
<keyword id="KW-0025">Alternative splicing</keyword>
<keyword id="KW-0966">Cell projection</keyword>
<keyword id="KW-1015">Disulfide bond</keyword>
<keyword id="KW-0245">EGF-like domain</keyword>
<keyword id="KW-0272">Extracellular matrix</keyword>
<keyword id="KW-0325">Glycoprotein</keyword>
<keyword id="KW-0358">Heparin-binding</keyword>
<keyword id="KW-0472">Membrane</keyword>
<keyword id="KW-0675">Receptor</keyword>
<keyword id="KW-1185">Reference proteome</keyword>
<keyword id="KW-0677">Repeat</keyword>
<keyword id="KW-0964">Secreted</keyword>
<keyword id="KW-0732">Signal</keyword>
<keyword id="KW-0812">Transmembrane</keyword>
<keyword id="KW-1133">Transmembrane helix</keyword>
<comment type="function">
    <text evidence="1">Chondroitin sulfate- and hyaluronan-binding proteoglycan involved in the organization of interphotoreceptor matrix; may participate in the maturation and maintenance of the light-sensitive photoreceptor outer segment. Binds heparin.</text>
</comment>
<comment type="subcellular location">
    <subcellularLocation>
        <location evidence="8">Photoreceptor outer segment membrane</location>
        <topology evidence="2">Single-pass type I membrane protein</topology>
    </subcellularLocation>
    <subcellularLocation>
        <location evidence="8">Photoreceptor inner segment membrane</location>
        <topology evidence="2">Single-pass type I membrane protein</topology>
    </subcellularLocation>
    <subcellularLocation>
        <location evidence="8">Secreted</location>
        <location evidence="8">Extracellular space</location>
        <location evidence="8">Extracellular matrix</location>
        <location evidence="8">Interphotoreceptor matrix</location>
    </subcellularLocation>
</comment>
<comment type="alternative products">
    <event type="alternative splicing"/>
    <isoform>
        <id>Q80XH2-1</id>
        <name>1</name>
        <sequence type="displayed"/>
    </isoform>
    <isoform>
        <id>Q80XH2-2</id>
        <name>2</name>
        <sequence type="described" ref="VSP_031612"/>
    </isoform>
</comment>
<comment type="tissue specificity">
    <text evidence="6 8">Expressed in the retina (at protein level) (PubMed:12589770, PubMed:29777959). Expressed in the pineal gland (PubMed:12589770).</text>
</comment>
<comment type="developmental stage">
    <text evidence="6">Increasing expression in retina from 15 dpc to adulthood: expressed at P8 when photoreceptor outer segments are in active stages of elongation; elevated expression at P10 in the developing IPM and at P15 in the region adjacent to the retina pigment epithelium (RPE). From P18 to P35, more homogeneously present in the IPM surrounding both cones and rods.</text>
</comment>
<comment type="sequence caution" evidence="10">
    <conflict type="erroneous initiation">
        <sequence resource="EMBL-CDS" id="AAO21221"/>
    </conflict>
    <text>Truncated N-terminus.</text>
</comment>
<comment type="sequence caution" evidence="10">
    <conflict type="frameshift">
        <sequence resource="EMBL-CDS" id="AAO21221"/>
    </conflict>
</comment>
<name>IMPG2_MOUSE</name>
<reference key="1">
    <citation type="journal article" date="2003" name="Exp. Eye Res.">
        <title>SPACRCAN in the interphotoreceptor matrix of the mouse retina: molecular, developmental and promoter analysis.</title>
        <authorList>
            <person name="Chen Q."/>
            <person name="Lee J.W."/>
            <person name="Nishiyama K."/>
            <person name="Shadrach K.G."/>
            <person name="Rayborn M.E."/>
            <person name="Hollyfield J.G."/>
        </authorList>
    </citation>
    <scope>NUCLEOTIDE SEQUENCE [MRNA] (ISOFORM 2)</scope>
    <scope>TISSUE SPECIFICITY</scope>
    <scope>DEVELOPMENTAL STAGE</scope>
</reference>
<reference key="2">
    <citation type="journal article" date="2004" name="Genome Res.">
        <title>The status, quality, and expansion of the NIH full-length cDNA project: the Mammalian Gene Collection (MGC).</title>
        <authorList>
            <consortium name="The MGC Project Team"/>
        </authorList>
    </citation>
    <scope>NUCLEOTIDE SEQUENCE [LARGE SCALE MRNA] (ISOFORM 1)</scope>
</reference>
<reference key="3">
    <citation type="journal article" date="2005" name="Science">
        <title>The transcriptional landscape of the mammalian genome.</title>
        <authorList>
            <person name="Carninci P."/>
            <person name="Kasukawa T."/>
            <person name="Katayama S."/>
            <person name="Gough J."/>
            <person name="Frith M.C."/>
            <person name="Maeda N."/>
            <person name="Oyama R."/>
            <person name="Ravasi T."/>
            <person name="Lenhard B."/>
            <person name="Wells C."/>
            <person name="Kodzius R."/>
            <person name="Shimokawa K."/>
            <person name="Bajic V.B."/>
            <person name="Brenner S.E."/>
            <person name="Batalov S."/>
            <person name="Forrest A.R."/>
            <person name="Zavolan M."/>
            <person name="Davis M.J."/>
            <person name="Wilming L.G."/>
            <person name="Aidinis V."/>
            <person name="Allen J.E."/>
            <person name="Ambesi-Impiombato A."/>
            <person name="Apweiler R."/>
            <person name="Aturaliya R.N."/>
            <person name="Bailey T.L."/>
            <person name="Bansal M."/>
            <person name="Baxter L."/>
            <person name="Beisel K.W."/>
            <person name="Bersano T."/>
            <person name="Bono H."/>
            <person name="Chalk A.M."/>
            <person name="Chiu K.P."/>
            <person name="Choudhary V."/>
            <person name="Christoffels A."/>
            <person name="Clutterbuck D.R."/>
            <person name="Crowe M.L."/>
            <person name="Dalla E."/>
            <person name="Dalrymple B.P."/>
            <person name="de Bono B."/>
            <person name="Della Gatta G."/>
            <person name="di Bernardo D."/>
            <person name="Down T."/>
            <person name="Engstrom P."/>
            <person name="Fagiolini M."/>
            <person name="Faulkner G."/>
            <person name="Fletcher C.F."/>
            <person name="Fukushima T."/>
            <person name="Furuno M."/>
            <person name="Futaki S."/>
            <person name="Gariboldi M."/>
            <person name="Georgii-Hemming P."/>
            <person name="Gingeras T.R."/>
            <person name="Gojobori T."/>
            <person name="Green R.E."/>
            <person name="Gustincich S."/>
            <person name="Harbers M."/>
            <person name="Hayashi Y."/>
            <person name="Hensch T.K."/>
            <person name="Hirokawa N."/>
            <person name="Hill D."/>
            <person name="Huminiecki L."/>
            <person name="Iacono M."/>
            <person name="Ikeo K."/>
            <person name="Iwama A."/>
            <person name="Ishikawa T."/>
            <person name="Jakt M."/>
            <person name="Kanapin A."/>
            <person name="Katoh M."/>
            <person name="Kawasawa Y."/>
            <person name="Kelso J."/>
            <person name="Kitamura H."/>
            <person name="Kitano H."/>
            <person name="Kollias G."/>
            <person name="Krishnan S.P."/>
            <person name="Kruger A."/>
            <person name="Kummerfeld S.K."/>
            <person name="Kurochkin I.V."/>
            <person name="Lareau L.F."/>
            <person name="Lazarevic D."/>
            <person name="Lipovich L."/>
            <person name="Liu J."/>
            <person name="Liuni S."/>
            <person name="McWilliam S."/>
            <person name="Madan Babu M."/>
            <person name="Madera M."/>
            <person name="Marchionni L."/>
            <person name="Matsuda H."/>
            <person name="Matsuzawa S."/>
            <person name="Miki H."/>
            <person name="Mignone F."/>
            <person name="Miyake S."/>
            <person name="Morris K."/>
            <person name="Mottagui-Tabar S."/>
            <person name="Mulder N."/>
            <person name="Nakano N."/>
            <person name="Nakauchi H."/>
            <person name="Ng P."/>
            <person name="Nilsson R."/>
            <person name="Nishiguchi S."/>
            <person name="Nishikawa S."/>
            <person name="Nori F."/>
            <person name="Ohara O."/>
            <person name="Okazaki Y."/>
            <person name="Orlando V."/>
            <person name="Pang K.C."/>
            <person name="Pavan W.J."/>
            <person name="Pavesi G."/>
            <person name="Pesole G."/>
            <person name="Petrovsky N."/>
            <person name="Piazza S."/>
            <person name="Reed J."/>
            <person name="Reid J.F."/>
            <person name="Ring B.Z."/>
            <person name="Ringwald M."/>
            <person name="Rost B."/>
            <person name="Ruan Y."/>
            <person name="Salzberg S.L."/>
            <person name="Sandelin A."/>
            <person name="Schneider C."/>
            <person name="Schoenbach C."/>
            <person name="Sekiguchi K."/>
            <person name="Semple C.A."/>
            <person name="Seno S."/>
            <person name="Sessa L."/>
            <person name="Sheng Y."/>
            <person name="Shibata Y."/>
            <person name="Shimada H."/>
            <person name="Shimada K."/>
            <person name="Silva D."/>
            <person name="Sinclair B."/>
            <person name="Sperling S."/>
            <person name="Stupka E."/>
            <person name="Sugiura K."/>
            <person name="Sultana R."/>
            <person name="Takenaka Y."/>
            <person name="Taki K."/>
            <person name="Tammoja K."/>
            <person name="Tan S.L."/>
            <person name="Tang S."/>
            <person name="Taylor M.S."/>
            <person name="Tegner J."/>
            <person name="Teichmann S.A."/>
            <person name="Ueda H.R."/>
            <person name="van Nimwegen E."/>
            <person name="Verardo R."/>
            <person name="Wei C.L."/>
            <person name="Yagi K."/>
            <person name="Yamanishi H."/>
            <person name="Zabarovsky E."/>
            <person name="Zhu S."/>
            <person name="Zimmer A."/>
            <person name="Hide W."/>
            <person name="Bult C."/>
            <person name="Grimmond S.M."/>
            <person name="Teasdale R.D."/>
            <person name="Liu E.T."/>
            <person name="Brusic V."/>
            <person name="Quackenbush J."/>
            <person name="Wahlestedt C."/>
            <person name="Mattick J.S."/>
            <person name="Hume D.A."/>
            <person name="Kai C."/>
            <person name="Sasaki D."/>
            <person name="Tomaru Y."/>
            <person name="Fukuda S."/>
            <person name="Kanamori-Katayama M."/>
            <person name="Suzuki M."/>
            <person name="Aoki J."/>
            <person name="Arakawa T."/>
            <person name="Iida J."/>
            <person name="Imamura K."/>
            <person name="Itoh M."/>
            <person name="Kato T."/>
            <person name="Kawaji H."/>
            <person name="Kawagashira N."/>
            <person name="Kawashima T."/>
            <person name="Kojima M."/>
            <person name="Kondo S."/>
            <person name="Konno H."/>
            <person name="Nakano K."/>
            <person name="Ninomiya N."/>
            <person name="Nishio T."/>
            <person name="Okada M."/>
            <person name="Plessy C."/>
            <person name="Shibata K."/>
            <person name="Shiraki T."/>
            <person name="Suzuki S."/>
            <person name="Tagami M."/>
            <person name="Waki K."/>
            <person name="Watahiki A."/>
            <person name="Okamura-Oho Y."/>
            <person name="Suzuki H."/>
            <person name="Kawai J."/>
            <person name="Hayashizaki Y."/>
        </authorList>
    </citation>
    <scope>NUCLEOTIDE SEQUENCE [LARGE SCALE MRNA] OF 965-1243 (ISOFORM 1)</scope>
    <source>
        <strain>C57BL/6J</strain>
        <tissue>Cerebellum</tissue>
    </source>
</reference>
<reference key="4">
    <citation type="journal article" date="2004" name="J. Biol. Chem.">
        <title>Spacrcan binding to hyaluronan and other glycosaminoglycans. Molecular and biochemical studies.</title>
        <authorList>
            <person name="Chen Q."/>
            <person name="Cai S."/>
            <person name="Shadrach K.G."/>
            <person name="Prestwich G.D."/>
            <person name="Hollyfield J.G."/>
        </authorList>
    </citation>
    <scope>BINDING REGIONS</scope>
    <scope>MUTAGENESIS OF ARG-255; ARG-263; ARG-1083; ARG-1091; 1136-ARG--ARG-1139 AND ARG-1147</scope>
</reference>
<reference key="5">
    <citation type="journal article" date="2018" name="Acta Biomater.">
        <title>Extracellular matrix component expression in human pluripotent stem cell-derived retinal organoids recapitulates retinogenesis in vivo and reveals an important role for IMPG1 and CD44 in the development of photoreceptors and interphotoreceptor matrix.</title>
        <authorList>
            <person name="Felemban M."/>
            <person name="Dorgau B."/>
            <person name="Hunt N.C."/>
            <person name="Hallam D."/>
            <person name="Zerti D."/>
            <person name="Bauer R."/>
            <person name="Ding Y."/>
            <person name="Collin J."/>
            <person name="Steel D."/>
            <person name="Krasnogor N."/>
            <person name="Al-Aama J."/>
            <person name="Lindsay S."/>
            <person name="Mellough C."/>
            <person name="Lako M."/>
        </authorList>
    </citation>
    <scope>SUBCELLULAR LOCATION</scope>
    <scope>TISSUE SPECIFICITY</scope>
</reference>
<gene>
    <name type="primary">Impg2</name>
</gene>